<accession>Q3UFY0</accession>
<accession>Q91X71</accession>
<protein>
    <recommendedName>
        <fullName>Ribosomal RNA processing protein 36 homolog</fullName>
    </recommendedName>
</protein>
<gene>
    <name type="primary">Rrp36</name>
</gene>
<sequence>MRKAGSRARAEAEGPHRAMEGGEVTGDRLKADTPDVSFEELLRLQGQGRPKAHKQLVAGNSTRTRSPQQPVCVADKHRPLEMSAKVRVPFLRQVVPISKKVARDPRFDDLSGDYNPEVFDKTYQFLNDIRAKEKQLVKKQLKRHRSGEERDKLQQLLQRMEQQEMAQQERKQQQELRLALKQERRAQAQQGHRPYFLKKSEQRQLALAEKFKELRRSKKLESFLSRKRRRNAGKDRRHLPLSKE</sequence>
<name>RRP36_MOUSE</name>
<keyword id="KW-0175">Coiled coil</keyword>
<keyword id="KW-0539">Nucleus</keyword>
<keyword id="KW-0597">Phosphoprotein</keyword>
<keyword id="KW-1185">Reference proteome</keyword>
<keyword id="KW-0690">Ribosome biogenesis</keyword>
<keyword id="KW-0698">rRNA processing</keyword>
<proteinExistence type="evidence at protein level"/>
<reference key="1">
    <citation type="journal article" date="2005" name="Science">
        <title>The transcriptional landscape of the mammalian genome.</title>
        <authorList>
            <person name="Carninci P."/>
            <person name="Kasukawa T."/>
            <person name="Katayama S."/>
            <person name="Gough J."/>
            <person name="Frith M.C."/>
            <person name="Maeda N."/>
            <person name="Oyama R."/>
            <person name="Ravasi T."/>
            <person name="Lenhard B."/>
            <person name="Wells C."/>
            <person name="Kodzius R."/>
            <person name="Shimokawa K."/>
            <person name="Bajic V.B."/>
            <person name="Brenner S.E."/>
            <person name="Batalov S."/>
            <person name="Forrest A.R."/>
            <person name="Zavolan M."/>
            <person name="Davis M.J."/>
            <person name="Wilming L.G."/>
            <person name="Aidinis V."/>
            <person name="Allen J.E."/>
            <person name="Ambesi-Impiombato A."/>
            <person name="Apweiler R."/>
            <person name="Aturaliya R.N."/>
            <person name="Bailey T.L."/>
            <person name="Bansal M."/>
            <person name="Baxter L."/>
            <person name="Beisel K.W."/>
            <person name="Bersano T."/>
            <person name="Bono H."/>
            <person name="Chalk A.M."/>
            <person name="Chiu K.P."/>
            <person name="Choudhary V."/>
            <person name="Christoffels A."/>
            <person name="Clutterbuck D.R."/>
            <person name="Crowe M.L."/>
            <person name="Dalla E."/>
            <person name="Dalrymple B.P."/>
            <person name="de Bono B."/>
            <person name="Della Gatta G."/>
            <person name="di Bernardo D."/>
            <person name="Down T."/>
            <person name="Engstrom P."/>
            <person name="Fagiolini M."/>
            <person name="Faulkner G."/>
            <person name="Fletcher C.F."/>
            <person name="Fukushima T."/>
            <person name="Furuno M."/>
            <person name="Futaki S."/>
            <person name="Gariboldi M."/>
            <person name="Georgii-Hemming P."/>
            <person name="Gingeras T.R."/>
            <person name="Gojobori T."/>
            <person name="Green R.E."/>
            <person name="Gustincich S."/>
            <person name="Harbers M."/>
            <person name="Hayashi Y."/>
            <person name="Hensch T.K."/>
            <person name="Hirokawa N."/>
            <person name="Hill D."/>
            <person name="Huminiecki L."/>
            <person name="Iacono M."/>
            <person name="Ikeo K."/>
            <person name="Iwama A."/>
            <person name="Ishikawa T."/>
            <person name="Jakt M."/>
            <person name="Kanapin A."/>
            <person name="Katoh M."/>
            <person name="Kawasawa Y."/>
            <person name="Kelso J."/>
            <person name="Kitamura H."/>
            <person name="Kitano H."/>
            <person name="Kollias G."/>
            <person name="Krishnan S.P."/>
            <person name="Kruger A."/>
            <person name="Kummerfeld S.K."/>
            <person name="Kurochkin I.V."/>
            <person name="Lareau L.F."/>
            <person name="Lazarevic D."/>
            <person name="Lipovich L."/>
            <person name="Liu J."/>
            <person name="Liuni S."/>
            <person name="McWilliam S."/>
            <person name="Madan Babu M."/>
            <person name="Madera M."/>
            <person name="Marchionni L."/>
            <person name="Matsuda H."/>
            <person name="Matsuzawa S."/>
            <person name="Miki H."/>
            <person name="Mignone F."/>
            <person name="Miyake S."/>
            <person name="Morris K."/>
            <person name="Mottagui-Tabar S."/>
            <person name="Mulder N."/>
            <person name="Nakano N."/>
            <person name="Nakauchi H."/>
            <person name="Ng P."/>
            <person name="Nilsson R."/>
            <person name="Nishiguchi S."/>
            <person name="Nishikawa S."/>
            <person name="Nori F."/>
            <person name="Ohara O."/>
            <person name="Okazaki Y."/>
            <person name="Orlando V."/>
            <person name="Pang K.C."/>
            <person name="Pavan W.J."/>
            <person name="Pavesi G."/>
            <person name="Pesole G."/>
            <person name="Petrovsky N."/>
            <person name="Piazza S."/>
            <person name="Reed J."/>
            <person name="Reid J.F."/>
            <person name="Ring B.Z."/>
            <person name="Ringwald M."/>
            <person name="Rost B."/>
            <person name="Ruan Y."/>
            <person name="Salzberg S.L."/>
            <person name="Sandelin A."/>
            <person name="Schneider C."/>
            <person name="Schoenbach C."/>
            <person name="Sekiguchi K."/>
            <person name="Semple C.A."/>
            <person name="Seno S."/>
            <person name="Sessa L."/>
            <person name="Sheng Y."/>
            <person name="Shibata Y."/>
            <person name="Shimada H."/>
            <person name="Shimada K."/>
            <person name="Silva D."/>
            <person name="Sinclair B."/>
            <person name="Sperling S."/>
            <person name="Stupka E."/>
            <person name="Sugiura K."/>
            <person name="Sultana R."/>
            <person name="Takenaka Y."/>
            <person name="Taki K."/>
            <person name="Tammoja K."/>
            <person name="Tan S.L."/>
            <person name="Tang S."/>
            <person name="Taylor M.S."/>
            <person name="Tegner J."/>
            <person name="Teichmann S.A."/>
            <person name="Ueda H.R."/>
            <person name="van Nimwegen E."/>
            <person name="Verardo R."/>
            <person name="Wei C.L."/>
            <person name="Yagi K."/>
            <person name="Yamanishi H."/>
            <person name="Zabarovsky E."/>
            <person name="Zhu S."/>
            <person name="Zimmer A."/>
            <person name="Hide W."/>
            <person name="Bult C."/>
            <person name="Grimmond S.M."/>
            <person name="Teasdale R.D."/>
            <person name="Liu E.T."/>
            <person name="Brusic V."/>
            <person name="Quackenbush J."/>
            <person name="Wahlestedt C."/>
            <person name="Mattick J.S."/>
            <person name="Hume D.A."/>
            <person name="Kai C."/>
            <person name="Sasaki D."/>
            <person name="Tomaru Y."/>
            <person name="Fukuda S."/>
            <person name="Kanamori-Katayama M."/>
            <person name="Suzuki M."/>
            <person name="Aoki J."/>
            <person name="Arakawa T."/>
            <person name="Iida J."/>
            <person name="Imamura K."/>
            <person name="Itoh M."/>
            <person name="Kato T."/>
            <person name="Kawaji H."/>
            <person name="Kawagashira N."/>
            <person name="Kawashima T."/>
            <person name="Kojima M."/>
            <person name="Kondo S."/>
            <person name="Konno H."/>
            <person name="Nakano K."/>
            <person name="Ninomiya N."/>
            <person name="Nishio T."/>
            <person name="Okada M."/>
            <person name="Plessy C."/>
            <person name="Shibata K."/>
            <person name="Shiraki T."/>
            <person name="Suzuki S."/>
            <person name="Tagami M."/>
            <person name="Waki K."/>
            <person name="Watahiki A."/>
            <person name="Okamura-Oho Y."/>
            <person name="Suzuki H."/>
            <person name="Kawai J."/>
            <person name="Hayashizaki Y."/>
        </authorList>
    </citation>
    <scope>NUCLEOTIDE SEQUENCE [LARGE SCALE MRNA]</scope>
    <source>
        <strain>C57BL/6J</strain>
    </source>
</reference>
<reference key="2">
    <citation type="journal article" date="2004" name="Genome Res.">
        <title>The status, quality, and expansion of the NIH full-length cDNA project: the Mammalian Gene Collection (MGC).</title>
        <authorList>
            <consortium name="The MGC Project Team"/>
        </authorList>
    </citation>
    <scope>NUCLEOTIDE SEQUENCE [LARGE SCALE MRNA] OF 12-244</scope>
    <source>
        <strain>FVB/N</strain>
        <tissue>Salivary gland</tissue>
    </source>
</reference>
<reference key="3">
    <citation type="journal article" date="2010" name="Cell">
        <title>A tissue-specific atlas of mouse protein phosphorylation and expression.</title>
        <authorList>
            <person name="Huttlin E.L."/>
            <person name="Jedrychowski M.P."/>
            <person name="Elias J.E."/>
            <person name="Goswami T."/>
            <person name="Rad R."/>
            <person name="Beausoleil S.A."/>
            <person name="Villen J."/>
            <person name="Haas W."/>
            <person name="Sowa M.E."/>
            <person name="Gygi S.P."/>
        </authorList>
    </citation>
    <scope>PHOSPHORYLATION [LARGE SCALE ANALYSIS] AT SER-66</scope>
    <scope>IDENTIFICATION BY MASS SPECTROMETRY [LARGE SCALE ANALYSIS]</scope>
    <source>
        <tissue>Spleen</tissue>
    </source>
</reference>
<feature type="chain" id="PRO_0000252158" description="Ribosomal RNA processing protein 36 homolog">
    <location>
        <begin position="1"/>
        <end position="244"/>
    </location>
</feature>
<feature type="region of interest" description="Disordered" evidence="4">
    <location>
        <begin position="1"/>
        <end position="74"/>
    </location>
</feature>
<feature type="region of interest" description="Disordered" evidence="4">
    <location>
        <begin position="219"/>
        <end position="244"/>
    </location>
</feature>
<feature type="coiled-coil region" evidence="3">
    <location>
        <begin position="141"/>
        <end position="190"/>
    </location>
</feature>
<feature type="short sequence motif" description="Nuclear localization signal" evidence="3">
    <location>
        <begin position="226"/>
        <end position="229"/>
    </location>
</feature>
<feature type="compositionally biased region" description="Basic and acidic residues" evidence="4">
    <location>
        <begin position="8"/>
        <end position="33"/>
    </location>
</feature>
<feature type="compositionally biased region" description="Polar residues" evidence="4">
    <location>
        <begin position="58"/>
        <end position="69"/>
    </location>
</feature>
<feature type="compositionally biased region" description="Basic residues" evidence="4">
    <location>
        <begin position="225"/>
        <end position="244"/>
    </location>
</feature>
<feature type="modified residue" description="Phosphoserine" evidence="2">
    <location>
        <position position="61"/>
    </location>
</feature>
<feature type="modified residue" description="Phosphoserine" evidence="6">
    <location>
        <position position="66"/>
    </location>
</feature>
<feature type="sequence conflict" description="In Ref. 2; AAH11248." evidence="5" ref="2">
    <original>PDV</original>
    <variation>SDM</variation>
    <location>
        <begin position="34"/>
        <end position="36"/>
    </location>
</feature>
<feature type="sequence conflict" description="In Ref. 2; AAH11248." evidence="5" ref="2">
    <original>R</original>
    <variation>K</variation>
    <location>
        <position position="143"/>
    </location>
</feature>
<feature type="sequence conflict" description="In Ref. 2; AAH11248." evidence="5" ref="2">
    <original>R</original>
    <variation>H</variation>
    <location>
        <position position="150"/>
    </location>
</feature>
<comment type="function">
    <text evidence="1">Involved in the early processing steps of the pre-rRNA in the maturation pathway leading to the 18S rRNA.</text>
</comment>
<comment type="subcellular location">
    <subcellularLocation>
        <location evidence="1">Nucleus</location>
        <location evidence="1">Nucleolus</location>
    </subcellularLocation>
</comment>
<comment type="similarity">
    <text evidence="5">Belongs to the RRP36 family.</text>
</comment>
<organism>
    <name type="scientific">Mus musculus</name>
    <name type="common">Mouse</name>
    <dbReference type="NCBI Taxonomy" id="10090"/>
    <lineage>
        <taxon>Eukaryota</taxon>
        <taxon>Metazoa</taxon>
        <taxon>Chordata</taxon>
        <taxon>Craniata</taxon>
        <taxon>Vertebrata</taxon>
        <taxon>Euteleostomi</taxon>
        <taxon>Mammalia</taxon>
        <taxon>Eutheria</taxon>
        <taxon>Euarchontoglires</taxon>
        <taxon>Glires</taxon>
        <taxon>Rodentia</taxon>
        <taxon>Myomorpha</taxon>
        <taxon>Muroidea</taxon>
        <taxon>Muridae</taxon>
        <taxon>Murinae</taxon>
        <taxon>Mus</taxon>
        <taxon>Mus</taxon>
    </lineage>
</organism>
<dbReference type="EMBL" id="AK148237">
    <property type="protein sequence ID" value="BAE28429.1"/>
    <property type="molecule type" value="mRNA"/>
</dbReference>
<dbReference type="EMBL" id="BC011248">
    <property type="protein sequence ID" value="AAH11248.1"/>
    <property type="molecule type" value="mRNA"/>
</dbReference>
<dbReference type="CCDS" id="CCDS37639.2"/>
<dbReference type="RefSeq" id="NP_659106.1">
    <property type="nucleotide sequence ID" value="NM_144857.1"/>
</dbReference>
<dbReference type="SMR" id="Q3UFY0"/>
<dbReference type="FunCoup" id="Q3UFY0">
    <property type="interactions" value="2451"/>
</dbReference>
<dbReference type="STRING" id="10090.ENSMUSP00000024766"/>
<dbReference type="iPTMnet" id="Q3UFY0"/>
<dbReference type="PhosphoSitePlus" id="Q3UFY0"/>
<dbReference type="jPOST" id="Q3UFY0"/>
<dbReference type="PeptideAtlas" id="Q3UFY0"/>
<dbReference type="ProteomicsDB" id="299816"/>
<dbReference type="Pumba" id="Q3UFY0"/>
<dbReference type="DNASU" id="224823"/>
<dbReference type="GeneID" id="224823"/>
<dbReference type="KEGG" id="mmu:224823"/>
<dbReference type="UCSC" id="uc008ctu.2">
    <property type="organism name" value="mouse"/>
</dbReference>
<dbReference type="AGR" id="MGI:2385053"/>
<dbReference type="CTD" id="88745"/>
<dbReference type="MGI" id="MGI:2385053">
    <property type="gene designation" value="Rrp36"/>
</dbReference>
<dbReference type="eggNOG" id="KOG3190">
    <property type="taxonomic scope" value="Eukaryota"/>
</dbReference>
<dbReference type="InParanoid" id="Q3UFY0"/>
<dbReference type="PhylomeDB" id="Q3UFY0"/>
<dbReference type="TreeFam" id="TF315154"/>
<dbReference type="Reactome" id="R-MMU-6791226">
    <property type="pathway name" value="Major pathway of rRNA processing in the nucleolus and cytosol"/>
</dbReference>
<dbReference type="BioGRID-ORCS" id="224823">
    <property type="hits" value="22 hits in 81 CRISPR screens"/>
</dbReference>
<dbReference type="ChiTaRS" id="Rrp36">
    <property type="organism name" value="mouse"/>
</dbReference>
<dbReference type="PRO" id="PR:Q3UFY0"/>
<dbReference type="Proteomes" id="UP000000589">
    <property type="component" value="Unplaced"/>
</dbReference>
<dbReference type="RNAct" id="Q3UFY0">
    <property type="molecule type" value="protein"/>
</dbReference>
<dbReference type="GO" id="GO:0005730">
    <property type="term" value="C:nucleolus"/>
    <property type="evidence" value="ECO:0000250"/>
    <property type="project" value="UniProtKB"/>
</dbReference>
<dbReference type="GO" id="GO:0042274">
    <property type="term" value="P:ribosomal small subunit biogenesis"/>
    <property type="evidence" value="ECO:0000250"/>
    <property type="project" value="UniProtKB"/>
</dbReference>
<dbReference type="GO" id="GO:0006364">
    <property type="term" value="P:rRNA processing"/>
    <property type="evidence" value="ECO:0000250"/>
    <property type="project" value="UniProtKB"/>
</dbReference>
<dbReference type="InterPro" id="IPR009292">
    <property type="entry name" value="RRP36"/>
</dbReference>
<dbReference type="PANTHER" id="PTHR21738">
    <property type="entry name" value="RIBOSOMAL RNA PROCESSING PROTEIN 36 HOMOLOG"/>
    <property type="match status" value="1"/>
</dbReference>
<dbReference type="PANTHER" id="PTHR21738:SF0">
    <property type="entry name" value="RIBOSOMAL RNA PROCESSING PROTEIN 36 HOMOLOG"/>
    <property type="match status" value="1"/>
</dbReference>
<dbReference type="Pfam" id="PF06102">
    <property type="entry name" value="RRP36"/>
    <property type="match status" value="1"/>
</dbReference>
<evidence type="ECO:0000250" key="1"/>
<evidence type="ECO:0000250" key="2">
    <source>
        <dbReference type="UniProtKB" id="Q96EU6"/>
    </source>
</evidence>
<evidence type="ECO:0000255" key="3"/>
<evidence type="ECO:0000256" key="4">
    <source>
        <dbReference type="SAM" id="MobiDB-lite"/>
    </source>
</evidence>
<evidence type="ECO:0000305" key="5"/>
<evidence type="ECO:0007744" key="6">
    <source>
    </source>
</evidence>